<name>PAN2_PICGU</name>
<gene>
    <name evidence="1" type="primary">PAN2</name>
    <name type="ORF">PGUG_00235</name>
</gene>
<evidence type="ECO:0000255" key="1">
    <source>
        <dbReference type="HAMAP-Rule" id="MF_03182"/>
    </source>
</evidence>
<evidence type="ECO:0000256" key="2">
    <source>
        <dbReference type="SAM" id="MobiDB-lite"/>
    </source>
</evidence>
<evidence type="ECO:0000305" key="3"/>
<accession>A5DAD0</accession>
<keyword id="KW-0963">Cytoplasm</keyword>
<keyword id="KW-0269">Exonuclease</keyword>
<keyword id="KW-0378">Hydrolase</keyword>
<keyword id="KW-0479">Metal-binding</keyword>
<keyword id="KW-0507">mRNA processing</keyword>
<keyword id="KW-0540">Nuclease</keyword>
<keyword id="KW-1185">Reference proteome</keyword>
<keyword id="KW-0677">Repeat</keyword>
<keyword id="KW-0853">WD repeat</keyword>
<feature type="chain" id="PRO_0000295353" description="PAN2-PAN3 deadenylation complex catalytic subunit PAN2">
    <location>
        <begin position="1"/>
        <end position="1098"/>
    </location>
</feature>
<feature type="repeat" description="WD 1" evidence="1">
    <location>
        <begin position="19"/>
        <end position="58"/>
    </location>
</feature>
<feature type="repeat" description="WD 2" evidence="1">
    <location>
        <begin position="150"/>
        <end position="190"/>
    </location>
</feature>
<feature type="repeat" description="WD 3" evidence="1">
    <location>
        <begin position="253"/>
        <end position="293"/>
    </location>
</feature>
<feature type="repeat" description="WD 4" evidence="1">
    <location>
        <begin position="300"/>
        <end position="338"/>
    </location>
</feature>
<feature type="domain" description="USP" evidence="1">
    <location>
        <begin position="466"/>
        <end position="839"/>
    </location>
</feature>
<feature type="domain" description="Exonuclease" evidence="1">
    <location>
        <begin position="894"/>
        <end position="1067"/>
    </location>
</feature>
<feature type="region of interest" description="Linker" evidence="1">
    <location>
        <begin position="340"/>
        <end position="466"/>
    </location>
</feature>
<feature type="region of interest" description="Disordered" evidence="2">
    <location>
        <begin position="417"/>
        <end position="442"/>
    </location>
</feature>
<feature type="binding site" evidence="1">
    <location>
        <position position="897"/>
    </location>
    <ligand>
        <name>a divalent metal cation</name>
        <dbReference type="ChEBI" id="CHEBI:60240"/>
        <note>catalytic</note>
    </ligand>
</feature>
<feature type="binding site" evidence="1">
    <location>
        <position position="899"/>
    </location>
    <ligand>
        <name>a divalent metal cation</name>
        <dbReference type="ChEBI" id="CHEBI:60240"/>
        <note>catalytic</note>
    </ligand>
</feature>
<feature type="binding site" evidence="1">
    <location>
        <position position="1006"/>
    </location>
    <ligand>
        <name>a divalent metal cation</name>
        <dbReference type="ChEBI" id="CHEBI:60240"/>
        <note>catalytic</note>
    </ligand>
</feature>
<feature type="binding site" evidence="1">
    <location>
        <position position="1059"/>
    </location>
    <ligand>
        <name>a divalent metal cation</name>
        <dbReference type="ChEBI" id="CHEBI:60240"/>
        <note>catalytic</note>
    </ligand>
</feature>
<reference key="1">
    <citation type="journal article" date="2009" name="Nature">
        <title>Evolution of pathogenicity and sexual reproduction in eight Candida genomes.</title>
        <authorList>
            <person name="Butler G."/>
            <person name="Rasmussen M.D."/>
            <person name="Lin M.F."/>
            <person name="Santos M.A.S."/>
            <person name="Sakthikumar S."/>
            <person name="Munro C.A."/>
            <person name="Rheinbay E."/>
            <person name="Grabherr M."/>
            <person name="Forche A."/>
            <person name="Reedy J.L."/>
            <person name="Agrafioti I."/>
            <person name="Arnaud M.B."/>
            <person name="Bates S."/>
            <person name="Brown A.J.P."/>
            <person name="Brunke S."/>
            <person name="Costanzo M.C."/>
            <person name="Fitzpatrick D.A."/>
            <person name="de Groot P.W.J."/>
            <person name="Harris D."/>
            <person name="Hoyer L.L."/>
            <person name="Hube B."/>
            <person name="Klis F.M."/>
            <person name="Kodira C."/>
            <person name="Lennard N."/>
            <person name="Logue M.E."/>
            <person name="Martin R."/>
            <person name="Neiman A.M."/>
            <person name="Nikolaou E."/>
            <person name="Quail M.A."/>
            <person name="Quinn J."/>
            <person name="Santos M.C."/>
            <person name="Schmitzberger F.F."/>
            <person name="Sherlock G."/>
            <person name="Shah P."/>
            <person name="Silverstein K.A.T."/>
            <person name="Skrzypek M.S."/>
            <person name="Soll D."/>
            <person name="Staggs R."/>
            <person name="Stansfield I."/>
            <person name="Stumpf M.P.H."/>
            <person name="Sudbery P.E."/>
            <person name="Srikantha T."/>
            <person name="Zeng Q."/>
            <person name="Berman J."/>
            <person name="Berriman M."/>
            <person name="Heitman J."/>
            <person name="Gow N.A.R."/>
            <person name="Lorenz M.C."/>
            <person name="Birren B.W."/>
            <person name="Kellis M."/>
            <person name="Cuomo C.A."/>
        </authorList>
    </citation>
    <scope>NUCLEOTIDE SEQUENCE [LARGE SCALE GENOMIC DNA]</scope>
    <source>
        <strain>ATCC 6260 / CBS 566 / DSM 6381 / JCM 1539 / NBRC 10279 / NRRL Y-324</strain>
    </source>
</reference>
<proteinExistence type="inferred from homology"/>
<organism>
    <name type="scientific">Meyerozyma guilliermondii (strain ATCC 6260 / CBS 566 / DSM 6381 / JCM 1539 / NBRC 10279 / NRRL Y-324)</name>
    <name type="common">Yeast</name>
    <name type="synonym">Candida guilliermondii</name>
    <dbReference type="NCBI Taxonomy" id="294746"/>
    <lineage>
        <taxon>Eukaryota</taxon>
        <taxon>Fungi</taxon>
        <taxon>Dikarya</taxon>
        <taxon>Ascomycota</taxon>
        <taxon>Saccharomycotina</taxon>
        <taxon>Pichiomycetes</taxon>
        <taxon>Debaryomycetaceae</taxon>
        <taxon>Meyerozyma</taxon>
    </lineage>
</organism>
<dbReference type="EC" id="3.1.13.4" evidence="1"/>
<dbReference type="EMBL" id="CH408155">
    <property type="protein sequence ID" value="EDK36137.2"/>
    <property type="status" value="ALT_SEQ"/>
    <property type="molecule type" value="Genomic_DNA"/>
</dbReference>
<dbReference type="RefSeq" id="XP_001486858.1">
    <property type="nucleotide sequence ID" value="XM_001486808.1"/>
</dbReference>
<dbReference type="SMR" id="A5DAD0"/>
<dbReference type="FunCoup" id="A5DAD0">
    <property type="interactions" value="680"/>
</dbReference>
<dbReference type="STRING" id="294746.A5DAD0"/>
<dbReference type="GeneID" id="5129459"/>
<dbReference type="KEGG" id="pgu:PGUG_00235"/>
<dbReference type="eggNOG" id="KOG1275">
    <property type="taxonomic scope" value="Eukaryota"/>
</dbReference>
<dbReference type="HOGENOM" id="CLU_002369_1_0_1"/>
<dbReference type="InParanoid" id="A5DAD0"/>
<dbReference type="OrthoDB" id="16516at2759"/>
<dbReference type="Proteomes" id="UP000001997">
    <property type="component" value="Unassembled WGS sequence"/>
</dbReference>
<dbReference type="GO" id="GO:0000932">
    <property type="term" value="C:P-body"/>
    <property type="evidence" value="ECO:0007669"/>
    <property type="project" value="TreeGrafter"/>
</dbReference>
<dbReference type="GO" id="GO:0031251">
    <property type="term" value="C:PAN complex"/>
    <property type="evidence" value="ECO:0007669"/>
    <property type="project" value="UniProtKB-UniRule"/>
</dbReference>
<dbReference type="GO" id="GO:0046872">
    <property type="term" value="F:metal ion binding"/>
    <property type="evidence" value="ECO:0007669"/>
    <property type="project" value="UniProtKB-KW"/>
</dbReference>
<dbReference type="GO" id="GO:0003676">
    <property type="term" value="F:nucleic acid binding"/>
    <property type="evidence" value="ECO:0007669"/>
    <property type="project" value="InterPro"/>
</dbReference>
<dbReference type="GO" id="GO:0004535">
    <property type="term" value="F:poly(A)-specific ribonuclease activity"/>
    <property type="evidence" value="ECO:0007669"/>
    <property type="project" value="UniProtKB-UniRule"/>
</dbReference>
<dbReference type="GO" id="GO:0006397">
    <property type="term" value="P:mRNA processing"/>
    <property type="evidence" value="ECO:0007669"/>
    <property type="project" value="UniProtKB-KW"/>
</dbReference>
<dbReference type="GO" id="GO:0000289">
    <property type="term" value="P:nuclear-transcribed mRNA poly(A) tail shortening"/>
    <property type="evidence" value="ECO:0007669"/>
    <property type="project" value="UniProtKB-UniRule"/>
</dbReference>
<dbReference type="CDD" id="cd06143">
    <property type="entry name" value="PAN2_exo"/>
    <property type="match status" value="1"/>
</dbReference>
<dbReference type="FunFam" id="3.30.420.10:FF:000028">
    <property type="entry name" value="PAN2-PAN3 deadenylation complex catalytic subunit PAN2"/>
    <property type="match status" value="1"/>
</dbReference>
<dbReference type="Gene3D" id="3.90.70.10">
    <property type="entry name" value="Cysteine proteinases"/>
    <property type="match status" value="1"/>
</dbReference>
<dbReference type="Gene3D" id="3.30.420.10">
    <property type="entry name" value="Ribonuclease H-like superfamily/Ribonuclease H"/>
    <property type="match status" value="1"/>
</dbReference>
<dbReference type="Gene3D" id="2.130.10.10">
    <property type="entry name" value="YVTN repeat-like/Quinoprotein amine dehydrogenase"/>
    <property type="match status" value="1"/>
</dbReference>
<dbReference type="HAMAP" id="MF_03182">
    <property type="entry name" value="PAN2"/>
    <property type="match status" value="1"/>
</dbReference>
<dbReference type="InterPro" id="IPR013520">
    <property type="entry name" value="Exonuclease_RNaseT/DNA_pol3"/>
</dbReference>
<dbReference type="InterPro" id="IPR030843">
    <property type="entry name" value="PAN2"/>
</dbReference>
<dbReference type="InterPro" id="IPR050785">
    <property type="entry name" value="PAN2-PAN3_catalytic_subunit"/>
</dbReference>
<dbReference type="InterPro" id="IPR048841">
    <property type="entry name" value="PAN2_N"/>
</dbReference>
<dbReference type="InterPro" id="IPR028881">
    <property type="entry name" value="PAN2_UCH_dom"/>
</dbReference>
<dbReference type="InterPro" id="IPR038765">
    <property type="entry name" value="Papain-like_cys_pep_sf"/>
</dbReference>
<dbReference type="InterPro" id="IPR012337">
    <property type="entry name" value="RNaseH-like_sf"/>
</dbReference>
<dbReference type="InterPro" id="IPR036397">
    <property type="entry name" value="RNaseH_sf"/>
</dbReference>
<dbReference type="InterPro" id="IPR028889">
    <property type="entry name" value="USP_dom"/>
</dbReference>
<dbReference type="InterPro" id="IPR015943">
    <property type="entry name" value="WD40/YVTN_repeat-like_dom_sf"/>
</dbReference>
<dbReference type="InterPro" id="IPR036322">
    <property type="entry name" value="WD40_repeat_dom_sf"/>
</dbReference>
<dbReference type="InterPro" id="IPR001680">
    <property type="entry name" value="WD40_rpt"/>
</dbReference>
<dbReference type="PANTHER" id="PTHR15728">
    <property type="entry name" value="DEADENYLATION COMPLEX CATALYTIC SUBUNIT PAN2"/>
    <property type="match status" value="1"/>
</dbReference>
<dbReference type="PANTHER" id="PTHR15728:SF0">
    <property type="entry name" value="PAN2-PAN3 DEADENYLATION COMPLEX CATALYTIC SUBUNIT PAN2"/>
    <property type="match status" value="1"/>
</dbReference>
<dbReference type="Pfam" id="PF20770">
    <property type="entry name" value="PAN2_N"/>
    <property type="match status" value="1"/>
</dbReference>
<dbReference type="Pfam" id="PF00929">
    <property type="entry name" value="RNase_T"/>
    <property type="match status" value="1"/>
</dbReference>
<dbReference type="Pfam" id="PF13423">
    <property type="entry name" value="UCH_1"/>
    <property type="match status" value="1"/>
</dbReference>
<dbReference type="SMART" id="SM00479">
    <property type="entry name" value="EXOIII"/>
    <property type="match status" value="1"/>
</dbReference>
<dbReference type="SMART" id="SM00320">
    <property type="entry name" value="WD40"/>
    <property type="match status" value="5"/>
</dbReference>
<dbReference type="SUPFAM" id="SSF54001">
    <property type="entry name" value="Cysteine proteinases"/>
    <property type="match status" value="1"/>
</dbReference>
<dbReference type="SUPFAM" id="SSF53098">
    <property type="entry name" value="Ribonuclease H-like"/>
    <property type="match status" value="1"/>
</dbReference>
<dbReference type="SUPFAM" id="SSF50978">
    <property type="entry name" value="WD40 repeat-like"/>
    <property type="match status" value="1"/>
</dbReference>
<dbReference type="PROSITE" id="PS50235">
    <property type="entry name" value="USP_3"/>
    <property type="match status" value="1"/>
</dbReference>
<protein>
    <recommendedName>
        <fullName evidence="1">PAN2-PAN3 deadenylation complex catalytic subunit PAN2</fullName>
        <ecNumber evidence="1">3.1.13.4</ecNumber>
    </recommendedName>
    <alternativeName>
        <fullName evidence="1">PAB1P-dependent poly(A)-specific ribonuclease</fullName>
    </alternativeName>
    <alternativeName>
        <fullName evidence="1">Poly(A)-nuclease deadenylation complex subunit 2</fullName>
        <shortName evidence="1">PAN deadenylation complex subunit 2</shortName>
    </alternativeName>
</protein>
<sequence length="1098" mass="123106">MEGWEEVSILAAILYSFPASKDPVTSLLFDSVHNLLWCGDSSGSARSFTPNAGYPFQLYPYTKFPATTSPLPVVQQRNHSRGILSLSQNCVNLNSRRGLSQATFTAASVTDSANVLRNLSCMTTLGTGNDIIVGGTHSLGSLDMQKCVATGFDHSGNLSFVDSVAKTLVLGTTDGTVELFDTASNSSVKSFPAHSGLLSDMAVQGNYIATCGYSARRRYDHKNSSAAGGTSYITDPLVHLIDTRMMKSLSPIPFPNGASFVRFHPKLPNIVIVASSTGVLEFVDIFDQSKLNVYQVNMSPASPGISRMEISDNGEYICCSEGRSLHLWSFTSDTNFVNFPAPLEEQDIPAPLPPPFEVDDPVPLSSVGMPYYKDYLLSNYATDMVFTKELSKVPAEVDTSLGHGAFVPYDRTAHGPRNISQPYQSLREPPGSNSNAPRFISERDGESNENMIHAENSIFHLKSPTSVPHCYSRLQIQYSKFGVDDFDFDYYNKSNGACSGLENHLDNSYTNALLQLYRAAPAFYNSVVESLLPEYLPNGPEIISWNPQGSSLLIELGYLFDMMHKAEGRNVKIANFSQLLTQSASAASAGVINTDEEKSLNADGLREIIIRFNHYLLSELTSNQRERRHTNSEKIEDIMGIKLEMQIKSQCTETETHTGSQLIFDLTSPPEQYLNKLAMLRRAEKTEITILSYMDYFMDQYKSASCRECEARGRPHAVNARQRVVRLPKVLSINLSMTNFELQQIHNCRGWLVPEFHIGEDERFVDAGRGRKYELLGYVCEISHGPGVKRGAHNLVSFVKIKGQWYLFNDFLVMPIAQEEALNLSYSWKKPVIIVYSEPGQDFSYFETSTFKKIQDLDTSIIYRDHFVRAAREGHRQEYKLLTKQEAPEIGTLIAIDAEFVVSEPEQLEIRYTGTRKLIKPKKLTLARVSVLRGNGPNIGVPFIDDYIVWTGHIEDYLTSFSGIEPGDLDPEVSKKALVTLQTVYRKLWLLLNMGCVFVGHGLQNDFRCINLVVPKTQVRDTADLFYLPEFKRKLSLKFLAYVLLKEKVQTGNHDSVEDAYTALMLFQKHEELTRTGDLETVLYQVYMEGQQRRFRAP</sequence>
<comment type="function">
    <text evidence="1">Catalytic subunit of the poly(A)-nuclease (PAN) deadenylation complex, one of two cytoplasmic mRNA deadenylases involved in mRNA turnover. PAN specifically shortens poly(A) tails of RNA and the activity is stimulated by poly(A)-binding protein PAB1. PAN deadenylation is followed by rapid degradation of the shortened mRNA tails by the CCR4-NOT complex. Deadenylated mRNAs are then degraded by two alternative mechanisms, namely exosome-mediated 3'-5' exonucleolytic degradation, or deadenylation-dependent mRNA decaping and subsequent 5'-3' exonucleolytic degradation by XRN1. May also be involved in post-transcriptional maturation of mRNA poly(A) tails.</text>
</comment>
<comment type="catalytic activity">
    <reaction evidence="1">
        <text>Exonucleolytic cleavage of poly(A) to 5'-AMP.</text>
        <dbReference type="EC" id="3.1.13.4"/>
    </reaction>
</comment>
<comment type="cofactor">
    <cofactor evidence="1">
        <name>a divalent metal cation</name>
        <dbReference type="ChEBI" id="CHEBI:60240"/>
    </cofactor>
    <text evidence="1">Binds 2 metal cations per subunit in the catalytic exonuclease domain.</text>
</comment>
<comment type="activity regulation">
    <text evidence="1">Positively regulated by the regulatory subunit PAN3.</text>
</comment>
<comment type="subunit">
    <text evidence="1">Forms a heterotrimer with an asymmetric homodimer of the regulatory subunit PAN3 to form the poly(A)-nuclease (PAN) deadenylation complex.</text>
</comment>
<comment type="subcellular location">
    <subcellularLocation>
        <location evidence="1">Cytoplasm</location>
    </subcellularLocation>
</comment>
<comment type="domain">
    <text evidence="1">Contains a pseudo-UCH domain. This ubiquitin C-terminal hydrolase (UCH)-like or ubiquitin specific protease (USP)-like domain is predicted to be catalytically inactive because it lacks the active site catalytic triad characteristic of thiol proteases, with residues at the equivalent structural positions that are incompatible with catalysis, and it cannot bind ubiquitin. It functions as a structural scaffold for intra- and intermolecular interactions in the complex.</text>
</comment>
<comment type="domain">
    <text evidence="1">The linker, or PAN3 interaction domain (PID), between the WD40 repeats and the pseudo-UCH domain mediates interaction with PAN3.</text>
</comment>
<comment type="similarity">
    <text evidence="1">Belongs to the peptidase C19 family. PAN2 subfamily.</text>
</comment>
<comment type="sequence caution" evidence="3">
    <conflict type="erroneous gene model prediction">
        <sequence resource="EMBL-CDS" id="EDK36137"/>
    </conflict>
</comment>